<evidence type="ECO:0000255" key="1">
    <source>
        <dbReference type="HAMAP-Rule" id="MF_01371"/>
    </source>
</evidence>
<evidence type="ECO:0000305" key="2"/>
<name>RL30_BACAH</name>
<gene>
    <name evidence="1" type="primary">rpmD</name>
    <name type="ordered locus">BALH_0126</name>
</gene>
<dbReference type="EMBL" id="CP000485">
    <property type="protein sequence ID" value="ABK83541.1"/>
    <property type="molecule type" value="Genomic_DNA"/>
</dbReference>
<dbReference type="RefSeq" id="WP_001085234.1">
    <property type="nucleotide sequence ID" value="NC_008600.1"/>
</dbReference>
<dbReference type="SMR" id="A0R8J8"/>
<dbReference type="GeneID" id="93010925"/>
<dbReference type="KEGG" id="btl:BALH_0126"/>
<dbReference type="HOGENOM" id="CLU_131047_2_1_9"/>
<dbReference type="GO" id="GO:0022625">
    <property type="term" value="C:cytosolic large ribosomal subunit"/>
    <property type="evidence" value="ECO:0007669"/>
    <property type="project" value="TreeGrafter"/>
</dbReference>
<dbReference type="GO" id="GO:0003735">
    <property type="term" value="F:structural constituent of ribosome"/>
    <property type="evidence" value="ECO:0007669"/>
    <property type="project" value="InterPro"/>
</dbReference>
<dbReference type="GO" id="GO:0006412">
    <property type="term" value="P:translation"/>
    <property type="evidence" value="ECO:0007669"/>
    <property type="project" value="UniProtKB-UniRule"/>
</dbReference>
<dbReference type="CDD" id="cd01658">
    <property type="entry name" value="Ribosomal_L30"/>
    <property type="match status" value="1"/>
</dbReference>
<dbReference type="FunFam" id="3.30.1390.20:FF:000001">
    <property type="entry name" value="50S ribosomal protein L30"/>
    <property type="match status" value="1"/>
</dbReference>
<dbReference type="Gene3D" id="3.30.1390.20">
    <property type="entry name" value="Ribosomal protein L30, ferredoxin-like fold domain"/>
    <property type="match status" value="1"/>
</dbReference>
<dbReference type="HAMAP" id="MF_01371_B">
    <property type="entry name" value="Ribosomal_uL30_B"/>
    <property type="match status" value="1"/>
</dbReference>
<dbReference type="InterPro" id="IPR036919">
    <property type="entry name" value="Ribo_uL30_ferredoxin-like_sf"/>
</dbReference>
<dbReference type="InterPro" id="IPR005996">
    <property type="entry name" value="Ribosomal_uL30_bac-type"/>
</dbReference>
<dbReference type="InterPro" id="IPR018038">
    <property type="entry name" value="Ribosomal_uL30_CS"/>
</dbReference>
<dbReference type="InterPro" id="IPR016082">
    <property type="entry name" value="Ribosomal_uL30_ferredoxin-like"/>
</dbReference>
<dbReference type="NCBIfam" id="TIGR01308">
    <property type="entry name" value="rpmD_bact"/>
    <property type="match status" value="1"/>
</dbReference>
<dbReference type="PANTHER" id="PTHR15892:SF2">
    <property type="entry name" value="LARGE RIBOSOMAL SUBUNIT PROTEIN UL30M"/>
    <property type="match status" value="1"/>
</dbReference>
<dbReference type="PANTHER" id="PTHR15892">
    <property type="entry name" value="MITOCHONDRIAL RIBOSOMAL PROTEIN L30"/>
    <property type="match status" value="1"/>
</dbReference>
<dbReference type="Pfam" id="PF00327">
    <property type="entry name" value="Ribosomal_L30"/>
    <property type="match status" value="1"/>
</dbReference>
<dbReference type="PIRSF" id="PIRSF002211">
    <property type="entry name" value="Ribosomal_L30_bac-type"/>
    <property type="match status" value="1"/>
</dbReference>
<dbReference type="SUPFAM" id="SSF55129">
    <property type="entry name" value="Ribosomal protein L30p/L7e"/>
    <property type="match status" value="1"/>
</dbReference>
<dbReference type="PROSITE" id="PS00634">
    <property type="entry name" value="RIBOSOMAL_L30"/>
    <property type="match status" value="1"/>
</dbReference>
<sequence>MAKKLEITLTRSVIGRPQDQRATVEALGLKKLNSTVVKEETPAILGMINKVSHLVTVKEA</sequence>
<accession>A0R8J8</accession>
<feature type="chain" id="PRO_1000056005" description="Large ribosomal subunit protein uL30">
    <location>
        <begin position="1"/>
        <end position="60"/>
    </location>
</feature>
<keyword id="KW-0687">Ribonucleoprotein</keyword>
<keyword id="KW-0689">Ribosomal protein</keyword>
<proteinExistence type="inferred from homology"/>
<reference key="1">
    <citation type="journal article" date="2007" name="J. Bacteriol.">
        <title>The complete genome sequence of Bacillus thuringiensis Al Hakam.</title>
        <authorList>
            <person name="Challacombe J.F."/>
            <person name="Altherr M.R."/>
            <person name="Xie G."/>
            <person name="Bhotika S.S."/>
            <person name="Brown N."/>
            <person name="Bruce D."/>
            <person name="Campbell C.S."/>
            <person name="Campbell M.L."/>
            <person name="Chen J."/>
            <person name="Chertkov O."/>
            <person name="Cleland C."/>
            <person name="Dimitrijevic M."/>
            <person name="Doggett N.A."/>
            <person name="Fawcett J.J."/>
            <person name="Glavina T."/>
            <person name="Goodwin L.A."/>
            <person name="Green L.D."/>
            <person name="Han C.S."/>
            <person name="Hill K.K."/>
            <person name="Hitchcock P."/>
            <person name="Jackson P.J."/>
            <person name="Keim P."/>
            <person name="Kewalramani A.R."/>
            <person name="Longmire J."/>
            <person name="Lucas S."/>
            <person name="Malfatti S."/>
            <person name="Martinez D."/>
            <person name="McMurry K."/>
            <person name="Meincke L.J."/>
            <person name="Misra M."/>
            <person name="Moseman B.L."/>
            <person name="Mundt M."/>
            <person name="Munk A.C."/>
            <person name="Okinaka R.T."/>
            <person name="Parson-Quintana B."/>
            <person name="Reilly L.P."/>
            <person name="Richardson P."/>
            <person name="Robinson D.L."/>
            <person name="Saunders E."/>
            <person name="Tapia R."/>
            <person name="Tesmer J.G."/>
            <person name="Thayer N."/>
            <person name="Thompson L.S."/>
            <person name="Tice H."/>
            <person name="Ticknor L.O."/>
            <person name="Wills P.L."/>
            <person name="Gilna P."/>
            <person name="Brettin T.S."/>
        </authorList>
    </citation>
    <scope>NUCLEOTIDE SEQUENCE [LARGE SCALE GENOMIC DNA]</scope>
    <source>
        <strain>Al Hakam</strain>
    </source>
</reference>
<protein>
    <recommendedName>
        <fullName evidence="1">Large ribosomal subunit protein uL30</fullName>
    </recommendedName>
    <alternativeName>
        <fullName evidence="2">50S ribosomal protein L30</fullName>
    </alternativeName>
</protein>
<organism>
    <name type="scientific">Bacillus thuringiensis (strain Al Hakam)</name>
    <dbReference type="NCBI Taxonomy" id="412694"/>
    <lineage>
        <taxon>Bacteria</taxon>
        <taxon>Bacillati</taxon>
        <taxon>Bacillota</taxon>
        <taxon>Bacilli</taxon>
        <taxon>Bacillales</taxon>
        <taxon>Bacillaceae</taxon>
        <taxon>Bacillus</taxon>
        <taxon>Bacillus cereus group</taxon>
    </lineage>
</organism>
<comment type="subunit">
    <text evidence="1">Part of the 50S ribosomal subunit.</text>
</comment>
<comment type="similarity">
    <text evidence="1">Belongs to the universal ribosomal protein uL30 family.</text>
</comment>